<keyword id="KW-0963">Cytoplasm</keyword>
<keyword id="KW-0342">GTP-binding</keyword>
<keyword id="KW-0547">Nucleotide-binding</keyword>
<keyword id="KW-0648">Protein biosynthesis</keyword>
<keyword id="KW-1185">Reference proteome</keyword>
<comment type="function">
    <text evidence="1">Increases the formation of ribosomal termination complexes and stimulates activities of RF-1 and RF-2. It binds guanine nucleotides and has strong preference for UGA stop codons. It may interact directly with the ribosome. The stimulation of RF-1 and RF-2 is significantly reduced by GTP and GDP, but not by GMP.</text>
</comment>
<comment type="subcellular location">
    <subcellularLocation>
        <location evidence="1">Cytoplasm</location>
    </subcellularLocation>
</comment>
<comment type="similarity">
    <text evidence="1">Belongs to the TRAFAC class translation factor GTPase superfamily. Classic translation factor GTPase family. PrfC subfamily.</text>
</comment>
<sequence length="514" mass="58433">MNLQEEIKKRRTFAIISHPDAGKTTITEQLLYFGGEIREAGTVKGKKTGTFAKSDWMDIEKQRGISVTSSVMQFDYDGKRVNILDTPGHEDFSEDTYRTLMAVDAAVMVVDSAKGIEAQTKKLFEVVKHRGIPVFTFMNKLDRDGREPLDLLQELEEVLGIASYPMNWPIGMGKAFEGLYDLYNQRLELYKGDERFASLEDGDKLFGSNPFYEQVKEDIELLNEAGNEFSEEAILAGDLTPVFFGSALTNFGVQTFLETFLKFAPEPHGHKKTDGEIVDPYDKDFSGFVFKIQANMDPRHRDRIAFVRIVSGEFERGMSVNLPRTGKTAKLSNVTQFMAESRENVTNAVAGDIIGVYDTGTYQVGDTLTVGKNKFEFEPLPTFTPEIFMKVSAKNVMKQKSFHKGIEQLVQEGAIQLYTNYQTGEYMLGAVGQLQFEVFKHRMEGEYNAEVVMTPMGKKTVRWISPDDLDERMSSSRNILAKDRFDQPVFLFENDFALRWFADKYPDVKLEEKM</sequence>
<protein>
    <recommendedName>
        <fullName evidence="1">Peptide chain release factor 3</fullName>
        <shortName evidence="1">RF-3</shortName>
    </recommendedName>
</protein>
<evidence type="ECO:0000255" key="1">
    <source>
        <dbReference type="HAMAP-Rule" id="MF_00072"/>
    </source>
</evidence>
<dbReference type="EMBL" id="CP000725">
    <property type="protein sequence ID" value="ABV10718.1"/>
    <property type="molecule type" value="Genomic_DNA"/>
</dbReference>
<dbReference type="RefSeq" id="WP_012130679.1">
    <property type="nucleotide sequence ID" value="NC_009785.1"/>
</dbReference>
<dbReference type="SMR" id="A8AYN4"/>
<dbReference type="STRING" id="467705.SGO_1617"/>
<dbReference type="KEGG" id="sgo:SGO_1617"/>
<dbReference type="eggNOG" id="COG4108">
    <property type="taxonomic scope" value="Bacteria"/>
</dbReference>
<dbReference type="HOGENOM" id="CLU_002794_2_1_9"/>
<dbReference type="Proteomes" id="UP000001131">
    <property type="component" value="Chromosome"/>
</dbReference>
<dbReference type="GO" id="GO:0005829">
    <property type="term" value="C:cytosol"/>
    <property type="evidence" value="ECO:0007669"/>
    <property type="project" value="TreeGrafter"/>
</dbReference>
<dbReference type="GO" id="GO:0005525">
    <property type="term" value="F:GTP binding"/>
    <property type="evidence" value="ECO:0007669"/>
    <property type="project" value="UniProtKB-UniRule"/>
</dbReference>
<dbReference type="GO" id="GO:0003924">
    <property type="term" value="F:GTPase activity"/>
    <property type="evidence" value="ECO:0007669"/>
    <property type="project" value="InterPro"/>
</dbReference>
<dbReference type="GO" id="GO:0016150">
    <property type="term" value="F:translation release factor activity, codon nonspecific"/>
    <property type="evidence" value="ECO:0007669"/>
    <property type="project" value="TreeGrafter"/>
</dbReference>
<dbReference type="GO" id="GO:0016149">
    <property type="term" value="F:translation release factor activity, codon specific"/>
    <property type="evidence" value="ECO:0007669"/>
    <property type="project" value="UniProtKB-UniRule"/>
</dbReference>
<dbReference type="GO" id="GO:0006449">
    <property type="term" value="P:regulation of translational termination"/>
    <property type="evidence" value="ECO:0007669"/>
    <property type="project" value="UniProtKB-UniRule"/>
</dbReference>
<dbReference type="CDD" id="cd04169">
    <property type="entry name" value="RF3"/>
    <property type="match status" value="1"/>
</dbReference>
<dbReference type="FunFam" id="2.40.30.10:FF:000040">
    <property type="entry name" value="Peptide chain release factor 3"/>
    <property type="match status" value="1"/>
</dbReference>
<dbReference type="FunFam" id="3.30.70.3280:FF:000001">
    <property type="entry name" value="Peptide chain release factor 3"/>
    <property type="match status" value="1"/>
</dbReference>
<dbReference type="FunFam" id="3.40.50.300:FF:000542">
    <property type="entry name" value="Peptide chain release factor 3"/>
    <property type="match status" value="1"/>
</dbReference>
<dbReference type="Gene3D" id="3.40.50.300">
    <property type="entry name" value="P-loop containing nucleotide triphosphate hydrolases"/>
    <property type="match status" value="1"/>
</dbReference>
<dbReference type="Gene3D" id="3.30.70.3280">
    <property type="entry name" value="Peptide chain release factor 3, domain III"/>
    <property type="match status" value="1"/>
</dbReference>
<dbReference type="Gene3D" id="2.40.30.10">
    <property type="entry name" value="Translation factors"/>
    <property type="match status" value="1"/>
</dbReference>
<dbReference type="HAMAP" id="MF_00072">
    <property type="entry name" value="Rel_fac_3"/>
    <property type="match status" value="1"/>
</dbReference>
<dbReference type="InterPro" id="IPR053905">
    <property type="entry name" value="EF-G-like_DII"/>
</dbReference>
<dbReference type="InterPro" id="IPR035647">
    <property type="entry name" value="EFG_III/V"/>
</dbReference>
<dbReference type="InterPro" id="IPR031157">
    <property type="entry name" value="G_TR_CS"/>
</dbReference>
<dbReference type="InterPro" id="IPR027417">
    <property type="entry name" value="P-loop_NTPase"/>
</dbReference>
<dbReference type="InterPro" id="IPR004548">
    <property type="entry name" value="PrfC"/>
</dbReference>
<dbReference type="InterPro" id="IPR032090">
    <property type="entry name" value="RF3_C"/>
</dbReference>
<dbReference type="InterPro" id="IPR038467">
    <property type="entry name" value="RF3_dom_3_sf"/>
</dbReference>
<dbReference type="InterPro" id="IPR041732">
    <property type="entry name" value="RF3_GTP-bd"/>
</dbReference>
<dbReference type="InterPro" id="IPR005225">
    <property type="entry name" value="Small_GTP-bd"/>
</dbReference>
<dbReference type="InterPro" id="IPR000795">
    <property type="entry name" value="T_Tr_GTP-bd_dom"/>
</dbReference>
<dbReference type="InterPro" id="IPR009000">
    <property type="entry name" value="Transl_B-barrel_sf"/>
</dbReference>
<dbReference type="NCBIfam" id="TIGR00503">
    <property type="entry name" value="prfC"/>
    <property type="match status" value="1"/>
</dbReference>
<dbReference type="NCBIfam" id="NF001964">
    <property type="entry name" value="PRK00741.1"/>
    <property type="match status" value="1"/>
</dbReference>
<dbReference type="NCBIfam" id="TIGR00231">
    <property type="entry name" value="small_GTP"/>
    <property type="match status" value="1"/>
</dbReference>
<dbReference type="PANTHER" id="PTHR43556">
    <property type="entry name" value="PEPTIDE CHAIN RELEASE FACTOR RF3"/>
    <property type="match status" value="1"/>
</dbReference>
<dbReference type="PANTHER" id="PTHR43556:SF2">
    <property type="entry name" value="PEPTIDE CHAIN RELEASE FACTOR RF3"/>
    <property type="match status" value="1"/>
</dbReference>
<dbReference type="Pfam" id="PF22042">
    <property type="entry name" value="EF-G_D2"/>
    <property type="match status" value="1"/>
</dbReference>
<dbReference type="Pfam" id="PF00009">
    <property type="entry name" value="GTP_EFTU"/>
    <property type="match status" value="1"/>
</dbReference>
<dbReference type="Pfam" id="PF16658">
    <property type="entry name" value="RF3_C"/>
    <property type="match status" value="1"/>
</dbReference>
<dbReference type="PRINTS" id="PR00315">
    <property type="entry name" value="ELONGATNFCT"/>
</dbReference>
<dbReference type="PRINTS" id="PR01037">
    <property type="entry name" value="TCRTETOQM"/>
</dbReference>
<dbReference type="SUPFAM" id="SSF54980">
    <property type="entry name" value="EF-G C-terminal domain-like"/>
    <property type="match status" value="1"/>
</dbReference>
<dbReference type="SUPFAM" id="SSF52540">
    <property type="entry name" value="P-loop containing nucleoside triphosphate hydrolases"/>
    <property type="match status" value="1"/>
</dbReference>
<dbReference type="SUPFAM" id="SSF50447">
    <property type="entry name" value="Translation proteins"/>
    <property type="match status" value="1"/>
</dbReference>
<dbReference type="PROSITE" id="PS00301">
    <property type="entry name" value="G_TR_1"/>
    <property type="match status" value="1"/>
</dbReference>
<dbReference type="PROSITE" id="PS51722">
    <property type="entry name" value="G_TR_2"/>
    <property type="match status" value="1"/>
</dbReference>
<gene>
    <name evidence="1" type="primary">prfC</name>
    <name type="ordered locus">SGO_1617</name>
</gene>
<organism>
    <name type="scientific">Streptococcus gordonii (strain Challis / ATCC 35105 / BCRC 15272 / CH1 / DL1 / V288)</name>
    <dbReference type="NCBI Taxonomy" id="467705"/>
    <lineage>
        <taxon>Bacteria</taxon>
        <taxon>Bacillati</taxon>
        <taxon>Bacillota</taxon>
        <taxon>Bacilli</taxon>
        <taxon>Lactobacillales</taxon>
        <taxon>Streptococcaceae</taxon>
        <taxon>Streptococcus</taxon>
    </lineage>
</organism>
<accession>A8AYN4</accession>
<reference key="1">
    <citation type="journal article" date="2007" name="J. Bacteriol.">
        <title>Genome-wide transcriptional changes in Streptococcus gordonii in response to competence signaling peptide.</title>
        <authorList>
            <person name="Vickerman M.M."/>
            <person name="Iobst S."/>
            <person name="Jesionowski A.M."/>
            <person name="Gill S.R."/>
        </authorList>
    </citation>
    <scope>NUCLEOTIDE SEQUENCE [LARGE SCALE GENOMIC DNA]</scope>
    <source>
        <strain>Challis / ATCC 35105 / BCRC 15272 / CH1 / DL1 / V288</strain>
    </source>
</reference>
<name>RF3_STRGC</name>
<proteinExistence type="inferred from homology"/>
<feature type="chain" id="PRO_1000075174" description="Peptide chain release factor 3">
    <location>
        <begin position="1"/>
        <end position="514"/>
    </location>
</feature>
<feature type="domain" description="tr-type G">
    <location>
        <begin position="8"/>
        <end position="268"/>
    </location>
</feature>
<feature type="binding site" evidence="1">
    <location>
        <begin position="17"/>
        <end position="24"/>
    </location>
    <ligand>
        <name>GTP</name>
        <dbReference type="ChEBI" id="CHEBI:37565"/>
    </ligand>
</feature>
<feature type="binding site" evidence="1">
    <location>
        <begin position="85"/>
        <end position="89"/>
    </location>
    <ligand>
        <name>GTP</name>
        <dbReference type="ChEBI" id="CHEBI:37565"/>
    </ligand>
</feature>
<feature type="binding site" evidence="1">
    <location>
        <begin position="139"/>
        <end position="142"/>
    </location>
    <ligand>
        <name>GTP</name>
        <dbReference type="ChEBI" id="CHEBI:37565"/>
    </ligand>
</feature>